<evidence type="ECO:0000255" key="1">
    <source>
        <dbReference type="HAMAP-Rule" id="MF_01366"/>
    </source>
</evidence>
<evidence type="ECO:0000305" key="2"/>
<reference key="1">
    <citation type="journal article" date="2009" name="Proc. Natl. Acad. Sci. U.S.A.">
        <title>Hamiltonella defensa, genome evolution of protective bacterial endosymbiont from pathogenic ancestors.</title>
        <authorList>
            <person name="Degnan P.H."/>
            <person name="Yu Y."/>
            <person name="Sisneros N."/>
            <person name="Wing R.A."/>
            <person name="Moran N.A."/>
        </authorList>
    </citation>
    <scope>NUCLEOTIDE SEQUENCE [LARGE SCALE GENOMIC DNA]</scope>
    <source>
        <strain>5AT</strain>
    </source>
</reference>
<protein>
    <recommendedName>
        <fullName evidence="1">Large ribosomal subunit protein uL13</fullName>
    </recommendedName>
    <alternativeName>
        <fullName evidence="2">50S ribosomal protein L13</fullName>
    </alternativeName>
</protein>
<sequence length="142" mass="16311">MKTFTAKKETVERDWYLVNADGKTLGRLATELARRLRGKHKPEYTPHVDTGDYLIVINAEKISVTGKKRKDKIYYRHTGYVGGIKQTTFEEMIARHPERVIEIAVKGMLPKGPLGRAMYRKLKVYKGATHHHIAQQPKVLNI</sequence>
<gene>
    <name evidence="1" type="primary">rplM</name>
    <name type="ordered locus">HDEF_1259</name>
</gene>
<feature type="chain" id="PRO_1000214956" description="Large ribosomal subunit protein uL13">
    <location>
        <begin position="1"/>
        <end position="142"/>
    </location>
</feature>
<dbReference type="EMBL" id="CP001277">
    <property type="protein sequence ID" value="ACQ67913.1"/>
    <property type="molecule type" value="Genomic_DNA"/>
</dbReference>
<dbReference type="RefSeq" id="WP_015873704.1">
    <property type="nucleotide sequence ID" value="NC_012751.1"/>
</dbReference>
<dbReference type="SMR" id="C4K5S0"/>
<dbReference type="STRING" id="572265.HDEF_1259"/>
<dbReference type="GeneID" id="66260958"/>
<dbReference type="KEGG" id="hde:HDEF_1259"/>
<dbReference type="eggNOG" id="COG0102">
    <property type="taxonomic scope" value="Bacteria"/>
</dbReference>
<dbReference type="HOGENOM" id="CLU_082184_2_2_6"/>
<dbReference type="Proteomes" id="UP000002334">
    <property type="component" value="Chromosome"/>
</dbReference>
<dbReference type="GO" id="GO:0022625">
    <property type="term" value="C:cytosolic large ribosomal subunit"/>
    <property type="evidence" value="ECO:0007669"/>
    <property type="project" value="TreeGrafter"/>
</dbReference>
<dbReference type="GO" id="GO:0003729">
    <property type="term" value="F:mRNA binding"/>
    <property type="evidence" value="ECO:0007669"/>
    <property type="project" value="TreeGrafter"/>
</dbReference>
<dbReference type="GO" id="GO:0003735">
    <property type="term" value="F:structural constituent of ribosome"/>
    <property type="evidence" value="ECO:0007669"/>
    <property type="project" value="InterPro"/>
</dbReference>
<dbReference type="GO" id="GO:0017148">
    <property type="term" value="P:negative regulation of translation"/>
    <property type="evidence" value="ECO:0007669"/>
    <property type="project" value="TreeGrafter"/>
</dbReference>
<dbReference type="GO" id="GO:0006412">
    <property type="term" value="P:translation"/>
    <property type="evidence" value="ECO:0007669"/>
    <property type="project" value="UniProtKB-UniRule"/>
</dbReference>
<dbReference type="CDD" id="cd00392">
    <property type="entry name" value="Ribosomal_L13"/>
    <property type="match status" value="1"/>
</dbReference>
<dbReference type="FunFam" id="3.90.1180.10:FF:000001">
    <property type="entry name" value="50S ribosomal protein L13"/>
    <property type="match status" value="1"/>
</dbReference>
<dbReference type="Gene3D" id="3.90.1180.10">
    <property type="entry name" value="Ribosomal protein L13"/>
    <property type="match status" value="1"/>
</dbReference>
<dbReference type="HAMAP" id="MF_01366">
    <property type="entry name" value="Ribosomal_uL13"/>
    <property type="match status" value="1"/>
</dbReference>
<dbReference type="InterPro" id="IPR005822">
    <property type="entry name" value="Ribosomal_uL13"/>
</dbReference>
<dbReference type="InterPro" id="IPR005823">
    <property type="entry name" value="Ribosomal_uL13_bac-type"/>
</dbReference>
<dbReference type="InterPro" id="IPR023563">
    <property type="entry name" value="Ribosomal_uL13_CS"/>
</dbReference>
<dbReference type="InterPro" id="IPR036899">
    <property type="entry name" value="Ribosomal_uL13_sf"/>
</dbReference>
<dbReference type="NCBIfam" id="TIGR01066">
    <property type="entry name" value="rplM_bact"/>
    <property type="match status" value="1"/>
</dbReference>
<dbReference type="PANTHER" id="PTHR11545:SF2">
    <property type="entry name" value="LARGE RIBOSOMAL SUBUNIT PROTEIN UL13M"/>
    <property type="match status" value="1"/>
</dbReference>
<dbReference type="PANTHER" id="PTHR11545">
    <property type="entry name" value="RIBOSOMAL PROTEIN L13"/>
    <property type="match status" value="1"/>
</dbReference>
<dbReference type="Pfam" id="PF00572">
    <property type="entry name" value="Ribosomal_L13"/>
    <property type="match status" value="1"/>
</dbReference>
<dbReference type="PIRSF" id="PIRSF002181">
    <property type="entry name" value="Ribosomal_L13"/>
    <property type="match status" value="1"/>
</dbReference>
<dbReference type="SUPFAM" id="SSF52161">
    <property type="entry name" value="Ribosomal protein L13"/>
    <property type="match status" value="1"/>
</dbReference>
<dbReference type="PROSITE" id="PS00783">
    <property type="entry name" value="RIBOSOMAL_L13"/>
    <property type="match status" value="1"/>
</dbReference>
<comment type="function">
    <text evidence="1">This protein is one of the early assembly proteins of the 50S ribosomal subunit, although it is not seen to bind rRNA by itself. It is important during the early stages of 50S assembly.</text>
</comment>
<comment type="subunit">
    <text evidence="1">Part of the 50S ribosomal subunit.</text>
</comment>
<comment type="similarity">
    <text evidence="1">Belongs to the universal ribosomal protein uL13 family.</text>
</comment>
<organism>
    <name type="scientific">Hamiltonella defensa subsp. Acyrthosiphon pisum (strain 5AT)</name>
    <dbReference type="NCBI Taxonomy" id="572265"/>
    <lineage>
        <taxon>Bacteria</taxon>
        <taxon>Pseudomonadati</taxon>
        <taxon>Pseudomonadota</taxon>
        <taxon>Gammaproteobacteria</taxon>
        <taxon>Enterobacterales</taxon>
        <taxon>Enterobacteriaceae</taxon>
        <taxon>aphid secondary symbionts</taxon>
        <taxon>Candidatus Hamiltonella</taxon>
    </lineage>
</organism>
<proteinExistence type="inferred from homology"/>
<accession>C4K5S0</accession>
<name>RL13_HAMD5</name>
<keyword id="KW-0687">Ribonucleoprotein</keyword>
<keyword id="KW-0689">Ribosomal protein</keyword>